<accession>O15998</accession>
<comment type="function">
    <text>Actins are highly conserved proteins that are involved in various types of cell motility and are ubiquitously expressed in all eukaryotic cells.</text>
</comment>
<comment type="catalytic activity">
    <reaction evidence="1">
        <text>ATP + H2O = ADP + phosphate + H(+)</text>
        <dbReference type="Rhea" id="RHEA:13065"/>
        <dbReference type="ChEBI" id="CHEBI:15377"/>
        <dbReference type="ChEBI" id="CHEBI:15378"/>
        <dbReference type="ChEBI" id="CHEBI:30616"/>
        <dbReference type="ChEBI" id="CHEBI:43474"/>
        <dbReference type="ChEBI" id="CHEBI:456216"/>
    </reaction>
</comment>
<comment type="subcellular location">
    <subcellularLocation>
        <location>Cytoplasm</location>
        <location>Cytoskeleton</location>
    </subcellularLocation>
</comment>
<comment type="similarity">
    <text evidence="2">Belongs to the actin family.</text>
</comment>
<evidence type="ECO:0000250" key="1">
    <source>
        <dbReference type="UniProtKB" id="P68137"/>
    </source>
</evidence>
<evidence type="ECO:0000305" key="2"/>
<name>ACTM_CIOSA</name>
<dbReference type="EC" id="3.6.4.-" evidence="1"/>
<dbReference type="EMBL" id="AB008817">
    <property type="protein sequence ID" value="BAA23596.1"/>
    <property type="molecule type" value="mRNA"/>
</dbReference>
<dbReference type="SMR" id="O15998"/>
<dbReference type="FunCoup" id="O15998">
    <property type="interactions" value="31"/>
</dbReference>
<dbReference type="STRING" id="51511.ENSCSAVP00000006787"/>
<dbReference type="Ensembl" id="ENSCSAVT00000006874.1">
    <property type="protein sequence ID" value="ENSCSAVP00000006787.1"/>
    <property type="gene ID" value="ENSCSAVG00000004060.1"/>
</dbReference>
<dbReference type="Ensembl" id="ENSCSAVT00000006875.1">
    <property type="protein sequence ID" value="ENSCSAVP00000006788.1"/>
    <property type="gene ID" value="ENSCSAVG00000004060.1"/>
</dbReference>
<dbReference type="Ensembl" id="ENSCSAVT00000006876.1">
    <property type="protein sequence ID" value="ENSCSAVP00000006789.1"/>
    <property type="gene ID" value="ENSCSAVG00000004060.1"/>
</dbReference>
<dbReference type="Ensembl" id="ENSCSAVT00000006877.1">
    <property type="protein sequence ID" value="ENSCSAVP00000006790.1"/>
    <property type="gene ID" value="ENSCSAVG00000004060.1"/>
</dbReference>
<dbReference type="Ensembl" id="ENSCSAVT00000006879.1">
    <property type="protein sequence ID" value="ENSCSAVP00000006792.1"/>
    <property type="gene ID" value="ENSCSAVG00000004060.1"/>
</dbReference>
<dbReference type="Ensembl" id="ENSCSAVT00000007071.1">
    <property type="protein sequence ID" value="ENSCSAVP00000006981.1"/>
    <property type="gene ID" value="ENSCSAVG00000004176.1"/>
</dbReference>
<dbReference type="Ensembl" id="ENSCSAVT00000007818.1">
    <property type="protein sequence ID" value="ENSCSAVP00000007718.1"/>
    <property type="gene ID" value="ENSCSAVG00000004614.1"/>
</dbReference>
<dbReference type="Ensembl" id="ENSCSAVT00000007820.1">
    <property type="protein sequence ID" value="ENSCSAVP00000007720.1"/>
    <property type="gene ID" value="ENSCSAVG00000004614.1"/>
</dbReference>
<dbReference type="Ensembl" id="ENSCSAVT00000014107.1">
    <property type="protein sequence ID" value="ENSCSAVP00000013947.1"/>
    <property type="gene ID" value="ENSCSAVG00000008180.1"/>
</dbReference>
<dbReference type="Ensembl" id="ENSCSAVT00000014109.1">
    <property type="protein sequence ID" value="ENSCSAVP00000013949.1"/>
    <property type="gene ID" value="ENSCSAVG00000008180.1"/>
</dbReference>
<dbReference type="Ensembl" id="ENSCSAVT00000014115.1">
    <property type="protein sequence ID" value="ENSCSAVP00000013955.1"/>
    <property type="gene ID" value="ENSCSAVG00000008180.1"/>
</dbReference>
<dbReference type="eggNOG" id="KOG0676">
    <property type="taxonomic scope" value="Eukaryota"/>
</dbReference>
<dbReference type="GeneTree" id="ENSGT00940000164361"/>
<dbReference type="HOGENOM" id="CLU_027965_0_2_1"/>
<dbReference type="InParanoid" id="O15998"/>
<dbReference type="OMA" id="WIAKGEY"/>
<dbReference type="TreeFam" id="TF354237"/>
<dbReference type="Proteomes" id="UP000007875">
    <property type="component" value="Unassembled WGS sequence"/>
</dbReference>
<dbReference type="GO" id="GO:0005737">
    <property type="term" value="C:cytoplasm"/>
    <property type="evidence" value="ECO:0007669"/>
    <property type="project" value="UniProtKB-KW"/>
</dbReference>
<dbReference type="GO" id="GO:0005856">
    <property type="term" value="C:cytoskeleton"/>
    <property type="evidence" value="ECO:0007669"/>
    <property type="project" value="UniProtKB-SubCell"/>
</dbReference>
<dbReference type="GO" id="GO:0005524">
    <property type="term" value="F:ATP binding"/>
    <property type="evidence" value="ECO:0007669"/>
    <property type="project" value="UniProtKB-KW"/>
</dbReference>
<dbReference type="GO" id="GO:0016787">
    <property type="term" value="F:hydrolase activity"/>
    <property type="evidence" value="ECO:0007669"/>
    <property type="project" value="UniProtKB-KW"/>
</dbReference>
<dbReference type="CDD" id="cd10224">
    <property type="entry name" value="ASKHA_NBD_actin"/>
    <property type="match status" value="1"/>
</dbReference>
<dbReference type="FunFam" id="3.30.420.40:FF:000131">
    <property type="entry name" value="Actin, alpha skeletal muscle"/>
    <property type="match status" value="1"/>
</dbReference>
<dbReference type="FunFam" id="3.30.420.40:FF:000291">
    <property type="entry name" value="Actin, alpha skeletal muscle"/>
    <property type="match status" value="1"/>
</dbReference>
<dbReference type="FunFam" id="3.90.640.10:FF:000047">
    <property type="entry name" value="Actin, alpha skeletal muscle"/>
    <property type="match status" value="1"/>
</dbReference>
<dbReference type="FunFam" id="3.30.420.40:FF:000058">
    <property type="entry name" value="Putative actin-related protein 5"/>
    <property type="match status" value="1"/>
</dbReference>
<dbReference type="Gene3D" id="3.30.420.40">
    <property type="match status" value="2"/>
</dbReference>
<dbReference type="Gene3D" id="3.90.640.10">
    <property type="entry name" value="Actin, Chain A, domain 4"/>
    <property type="match status" value="1"/>
</dbReference>
<dbReference type="InterPro" id="IPR004000">
    <property type="entry name" value="Actin"/>
</dbReference>
<dbReference type="InterPro" id="IPR020902">
    <property type="entry name" value="Actin/actin-like_CS"/>
</dbReference>
<dbReference type="InterPro" id="IPR004001">
    <property type="entry name" value="Actin_CS"/>
</dbReference>
<dbReference type="InterPro" id="IPR043129">
    <property type="entry name" value="ATPase_NBD"/>
</dbReference>
<dbReference type="PANTHER" id="PTHR11937">
    <property type="entry name" value="ACTIN"/>
    <property type="match status" value="1"/>
</dbReference>
<dbReference type="Pfam" id="PF00022">
    <property type="entry name" value="Actin"/>
    <property type="match status" value="1"/>
</dbReference>
<dbReference type="PRINTS" id="PR00190">
    <property type="entry name" value="ACTIN"/>
</dbReference>
<dbReference type="SMART" id="SM00268">
    <property type="entry name" value="ACTIN"/>
    <property type="match status" value="1"/>
</dbReference>
<dbReference type="SUPFAM" id="SSF53067">
    <property type="entry name" value="Actin-like ATPase domain"/>
    <property type="match status" value="2"/>
</dbReference>
<dbReference type="PROSITE" id="PS00406">
    <property type="entry name" value="ACTINS_1"/>
    <property type="match status" value="1"/>
</dbReference>
<dbReference type="PROSITE" id="PS00432">
    <property type="entry name" value="ACTINS_2"/>
    <property type="match status" value="1"/>
</dbReference>
<dbReference type="PROSITE" id="PS01132">
    <property type="entry name" value="ACTINS_ACT_LIKE"/>
    <property type="match status" value="1"/>
</dbReference>
<reference key="1">
    <citation type="submission" date="1997-11" db="EMBL/GenBank/DDBJ databases">
        <authorList>
            <person name="Chiba S."/>
            <person name="Satou Y."/>
            <person name="Nishikata T."/>
            <person name="Satoh N."/>
        </authorList>
    </citation>
    <scope>NUCLEOTIDE SEQUENCE [MRNA]</scope>
</reference>
<protein>
    <recommendedName>
        <fullName>Actin, muscle</fullName>
        <ecNumber evidence="1">3.6.4.-</ecNumber>
    </recommendedName>
</protein>
<sequence length="378" mass="42103">MSDSEEDQTALVCDNGSGLVKSGFAGDDAPRAVFPSIVGRPRHQGVMVGMGQKDSYVGDEAQSKRGILTLKYPIEHGIITNWDDMEKIWHHTFYNELRVAPEEHPTLLTEAPLNPKANREKMTQIMFETFNVPAMYVAIQAVLSLYASGRTTGIVMDAGDGVSHNVPIYEGYALPHAIARLDLAGRDLTDYLMKILTERGYSFVTTAEREIVRDIKEKLCYVALDFEQEMATAASSTSLEKSYELPDGQVITIGNERFRCPETLFQPSFIGMESAGIHETTYNSIMKCDIDIRKDLYANNVLSGGTTMYPGIADRMQKEITALAPSTMKIKIIAPPERKYSVWIGGSILASLSTFQQMWITKQEYDEAGPSIVHRKCF</sequence>
<proteinExistence type="evidence at transcript level"/>
<keyword id="KW-0067">ATP-binding</keyword>
<keyword id="KW-0963">Cytoplasm</keyword>
<keyword id="KW-0206">Cytoskeleton</keyword>
<keyword id="KW-0378">Hydrolase</keyword>
<keyword id="KW-0514">Muscle protein</keyword>
<keyword id="KW-0547">Nucleotide-binding</keyword>
<keyword id="KW-1185">Reference proteome</keyword>
<feature type="chain" id="PRO_0000088911" description="Actin, muscle">
    <location>
        <begin position="1"/>
        <end position="378"/>
    </location>
</feature>
<organism>
    <name type="scientific">Ciona savignyi</name>
    <name type="common">Pacific transparent sea squirt</name>
    <dbReference type="NCBI Taxonomy" id="51511"/>
    <lineage>
        <taxon>Eukaryota</taxon>
        <taxon>Metazoa</taxon>
        <taxon>Chordata</taxon>
        <taxon>Tunicata</taxon>
        <taxon>Ascidiacea</taxon>
        <taxon>Phlebobranchia</taxon>
        <taxon>Cionidae</taxon>
        <taxon>Ciona</taxon>
    </lineage>
</organism>